<gene>
    <name evidence="1" type="primary">hisE</name>
    <name type="ordered locus">Mfla_0256</name>
</gene>
<organism>
    <name type="scientific">Methylobacillus flagellatus (strain ATCC 51484 / DSM 6875 / VKM B-1610 / KT)</name>
    <dbReference type="NCBI Taxonomy" id="265072"/>
    <lineage>
        <taxon>Bacteria</taxon>
        <taxon>Pseudomonadati</taxon>
        <taxon>Pseudomonadota</taxon>
        <taxon>Betaproteobacteria</taxon>
        <taxon>Nitrosomonadales</taxon>
        <taxon>Methylophilaceae</taxon>
        <taxon>Methylobacillus</taxon>
    </lineage>
</organism>
<reference key="1">
    <citation type="submission" date="2006-03" db="EMBL/GenBank/DDBJ databases">
        <title>Complete sequence of Methylobacillus flagellatus KT.</title>
        <authorList>
            <consortium name="US DOE Joint Genome Institute"/>
            <person name="Copeland A."/>
            <person name="Lucas S."/>
            <person name="Lapidus A."/>
            <person name="Barry K."/>
            <person name="Detter J.C."/>
            <person name="Glavina del Rio T."/>
            <person name="Hammon N."/>
            <person name="Israni S."/>
            <person name="Dalin E."/>
            <person name="Tice H."/>
            <person name="Pitluck S."/>
            <person name="Brettin T."/>
            <person name="Bruce D."/>
            <person name="Han C."/>
            <person name="Tapia R."/>
            <person name="Saunders E."/>
            <person name="Gilna P."/>
            <person name="Schmutz J."/>
            <person name="Larimer F."/>
            <person name="Land M."/>
            <person name="Kyrpides N."/>
            <person name="Anderson I."/>
            <person name="Richardson P."/>
        </authorList>
    </citation>
    <scope>NUCLEOTIDE SEQUENCE [LARGE SCALE GENOMIC DNA]</scope>
    <source>
        <strain>ATCC 51484 / DSM 6875 / VKM B-1610 / KT</strain>
    </source>
</reference>
<dbReference type="EC" id="3.6.1.31" evidence="1"/>
<dbReference type="EMBL" id="CP000284">
    <property type="protein sequence ID" value="ABE48527.1"/>
    <property type="molecule type" value="Genomic_DNA"/>
</dbReference>
<dbReference type="RefSeq" id="WP_011478624.1">
    <property type="nucleotide sequence ID" value="NC_007947.1"/>
</dbReference>
<dbReference type="SMR" id="Q1H4R0"/>
<dbReference type="STRING" id="265072.Mfla_0256"/>
<dbReference type="KEGG" id="mfa:Mfla_0256"/>
<dbReference type="eggNOG" id="COG0140">
    <property type="taxonomic scope" value="Bacteria"/>
</dbReference>
<dbReference type="HOGENOM" id="CLU_123337_1_2_4"/>
<dbReference type="OrthoDB" id="9814738at2"/>
<dbReference type="UniPathway" id="UPA00031">
    <property type="reaction ID" value="UER00007"/>
</dbReference>
<dbReference type="Proteomes" id="UP000002440">
    <property type="component" value="Chromosome"/>
</dbReference>
<dbReference type="GO" id="GO:0005737">
    <property type="term" value="C:cytoplasm"/>
    <property type="evidence" value="ECO:0007669"/>
    <property type="project" value="UniProtKB-SubCell"/>
</dbReference>
<dbReference type="GO" id="GO:0005524">
    <property type="term" value="F:ATP binding"/>
    <property type="evidence" value="ECO:0007669"/>
    <property type="project" value="UniProtKB-KW"/>
</dbReference>
<dbReference type="GO" id="GO:0004636">
    <property type="term" value="F:phosphoribosyl-ATP diphosphatase activity"/>
    <property type="evidence" value="ECO:0007669"/>
    <property type="project" value="UniProtKB-UniRule"/>
</dbReference>
<dbReference type="GO" id="GO:0000105">
    <property type="term" value="P:L-histidine biosynthetic process"/>
    <property type="evidence" value="ECO:0007669"/>
    <property type="project" value="UniProtKB-UniRule"/>
</dbReference>
<dbReference type="CDD" id="cd11534">
    <property type="entry name" value="NTP-PPase_HisIE_like"/>
    <property type="match status" value="1"/>
</dbReference>
<dbReference type="FunFam" id="1.10.287.1080:FF:000002">
    <property type="entry name" value="Histidine biosynthesis bifunctional protein HisIE"/>
    <property type="match status" value="1"/>
</dbReference>
<dbReference type="Gene3D" id="1.10.287.1080">
    <property type="entry name" value="MazG-like"/>
    <property type="match status" value="1"/>
</dbReference>
<dbReference type="HAMAP" id="MF_01020">
    <property type="entry name" value="HisE"/>
    <property type="match status" value="1"/>
</dbReference>
<dbReference type="InterPro" id="IPR008179">
    <property type="entry name" value="HisE"/>
</dbReference>
<dbReference type="InterPro" id="IPR021130">
    <property type="entry name" value="PRib-ATP_PPHydrolase-like"/>
</dbReference>
<dbReference type="NCBIfam" id="TIGR03188">
    <property type="entry name" value="histidine_hisI"/>
    <property type="match status" value="1"/>
</dbReference>
<dbReference type="NCBIfam" id="NF001611">
    <property type="entry name" value="PRK00400.1-3"/>
    <property type="match status" value="1"/>
</dbReference>
<dbReference type="NCBIfam" id="NF001613">
    <property type="entry name" value="PRK00400.1-5"/>
    <property type="match status" value="1"/>
</dbReference>
<dbReference type="PANTHER" id="PTHR42945">
    <property type="entry name" value="HISTIDINE BIOSYNTHESIS BIFUNCTIONAL PROTEIN"/>
    <property type="match status" value="1"/>
</dbReference>
<dbReference type="PANTHER" id="PTHR42945:SF9">
    <property type="entry name" value="HISTIDINE BIOSYNTHESIS BIFUNCTIONAL PROTEIN HISIE"/>
    <property type="match status" value="1"/>
</dbReference>
<dbReference type="Pfam" id="PF01503">
    <property type="entry name" value="PRA-PH"/>
    <property type="match status" value="1"/>
</dbReference>
<dbReference type="SUPFAM" id="SSF101386">
    <property type="entry name" value="all-alpha NTP pyrophosphatases"/>
    <property type="match status" value="1"/>
</dbReference>
<name>HIS2_METFK</name>
<sequence>MSDVLDRLAELLEQRKSADPQSSYVAKLYAKGTDAILKKIGEEATEAIIAAKDGDAEQIVYETADLWFHSLVMLANAGLGPQDVLRELARREGLSGLEEKASRPVE</sequence>
<accession>Q1H4R0</accession>
<feature type="chain" id="PRO_1000063349" description="Phosphoribosyl-ATP pyrophosphatase">
    <location>
        <begin position="1"/>
        <end position="106"/>
    </location>
</feature>
<protein>
    <recommendedName>
        <fullName evidence="1">Phosphoribosyl-ATP pyrophosphatase</fullName>
        <shortName evidence="1">PRA-PH</shortName>
        <ecNumber evidence="1">3.6.1.31</ecNumber>
    </recommendedName>
</protein>
<comment type="catalytic activity">
    <reaction evidence="1">
        <text>1-(5-phospho-beta-D-ribosyl)-ATP + H2O = 1-(5-phospho-beta-D-ribosyl)-5'-AMP + diphosphate + H(+)</text>
        <dbReference type="Rhea" id="RHEA:22828"/>
        <dbReference type="ChEBI" id="CHEBI:15377"/>
        <dbReference type="ChEBI" id="CHEBI:15378"/>
        <dbReference type="ChEBI" id="CHEBI:33019"/>
        <dbReference type="ChEBI" id="CHEBI:59457"/>
        <dbReference type="ChEBI" id="CHEBI:73183"/>
        <dbReference type="EC" id="3.6.1.31"/>
    </reaction>
</comment>
<comment type="pathway">
    <text evidence="1">Amino-acid biosynthesis; L-histidine biosynthesis; L-histidine from 5-phospho-alpha-D-ribose 1-diphosphate: step 2/9.</text>
</comment>
<comment type="subcellular location">
    <subcellularLocation>
        <location evidence="1">Cytoplasm</location>
    </subcellularLocation>
</comment>
<comment type="similarity">
    <text evidence="1">Belongs to the PRA-PH family.</text>
</comment>
<keyword id="KW-0028">Amino-acid biosynthesis</keyword>
<keyword id="KW-0067">ATP-binding</keyword>
<keyword id="KW-0963">Cytoplasm</keyword>
<keyword id="KW-0368">Histidine biosynthesis</keyword>
<keyword id="KW-0378">Hydrolase</keyword>
<keyword id="KW-0547">Nucleotide-binding</keyword>
<keyword id="KW-1185">Reference proteome</keyword>
<evidence type="ECO:0000255" key="1">
    <source>
        <dbReference type="HAMAP-Rule" id="MF_01020"/>
    </source>
</evidence>
<proteinExistence type="inferred from homology"/>